<sequence length="184" mass="20065">MGLEERLPGGILLSTVEKVAGYVRAGSLWPATFGLACCAIEMMSTAGPRFDISRFGMERFSATPRQADLMIVAGRVSQKMAPVLRQIYDQMAEPKWVLAMGVCASSGGMFNNYAIVQGVDHVVPVDIYLPGCPPRPEMLLHAIIKLHEKIQQMPLGVNRDEAIREAEQAALAVPSTIELKGLLR</sequence>
<proteinExistence type="inferred from homology"/>
<feature type="chain" id="PRO_0000376283" description="NADH-quinone oxidoreductase subunit B">
    <location>
        <begin position="1"/>
        <end position="184"/>
    </location>
</feature>
<feature type="binding site" evidence="1">
    <location>
        <position position="37"/>
    </location>
    <ligand>
        <name>[4Fe-4S] cluster</name>
        <dbReference type="ChEBI" id="CHEBI:49883"/>
    </ligand>
</feature>
<feature type="binding site" evidence="1">
    <location>
        <position position="38"/>
    </location>
    <ligand>
        <name>[4Fe-4S] cluster</name>
        <dbReference type="ChEBI" id="CHEBI:49883"/>
    </ligand>
</feature>
<feature type="binding site" evidence="1">
    <location>
        <position position="103"/>
    </location>
    <ligand>
        <name>[4Fe-4S] cluster</name>
        <dbReference type="ChEBI" id="CHEBI:49883"/>
    </ligand>
</feature>
<feature type="binding site" evidence="1">
    <location>
        <position position="132"/>
    </location>
    <ligand>
        <name>[4Fe-4S] cluster</name>
        <dbReference type="ChEBI" id="CHEBI:49883"/>
    </ligand>
</feature>
<organism>
    <name type="scientific">Mycobacterium sp. (strain MCS)</name>
    <dbReference type="NCBI Taxonomy" id="164756"/>
    <lineage>
        <taxon>Bacteria</taxon>
        <taxon>Bacillati</taxon>
        <taxon>Actinomycetota</taxon>
        <taxon>Actinomycetes</taxon>
        <taxon>Mycobacteriales</taxon>
        <taxon>Mycobacteriaceae</taxon>
        <taxon>Mycobacterium</taxon>
    </lineage>
</organism>
<name>NUOB_MYCSS</name>
<keyword id="KW-0004">4Fe-4S</keyword>
<keyword id="KW-1003">Cell membrane</keyword>
<keyword id="KW-0408">Iron</keyword>
<keyword id="KW-0411">Iron-sulfur</keyword>
<keyword id="KW-0472">Membrane</keyword>
<keyword id="KW-0479">Metal-binding</keyword>
<keyword id="KW-0520">NAD</keyword>
<keyword id="KW-0874">Quinone</keyword>
<keyword id="KW-1278">Translocase</keyword>
<keyword id="KW-0813">Transport</keyword>
<reference key="1">
    <citation type="submission" date="2006-06" db="EMBL/GenBank/DDBJ databases">
        <title>Complete sequence of chromosome of Mycobacterium sp. MCS.</title>
        <authorList>
            <consortium name="US DOE Joint Genome Institute"/>
            <person name="Copeland A."/>
            <person name="Lucas S."/>
            <person name="Lapidus A."/>
            <person name="Barry K."/>
            <person name="Detter J.C."/>
            <person name="Glavina del Rio T."/>
            <person name="Hammon N."/>
            <person name="Israni S."/>
            <person name="Dalin E."/>
            <person name="Tice H."/>
            <person name="Pitluck S."/>
            <person name="Martinez M."/>
            <person name="Schmutz J."/>
            <person name="Larimer F."/>
            <person name="Land M."/>
            <person name="Hauser L."/>
            <person name="Kyrpides N."/>
            <person name="Kim E."/>
            <person name="Miller C.D."/>
            <person name="Hughes J.E."/>
            <person name="Anderson A.J."/>
            <person name="Sims R.C."/>
            <person name="Richardson P."/>
        </authorList>
    </citation>
    <scope>NUCLEOTIDE SEQUENCE [LARGE SCALE GENOMIC DNA]</scope>
    <source>
        <strain>MCS</strain>
    </source>
</reference>
<dbReference type="EC" id="7.1.1.-" evidence="1"/>
<dbReference type="EMBL" id="CP000384">
    <property type="protein sequence ID" value="ABG07690.1"/>
    <property type="molecule type" value="Genomic_DNA"/>
</dbReference>
<dbReference type="SMR" id="Q1BBP4"/>
<dbReference type="KEGG" id="mmc:Mmcs_1579"/>
<dbReference type="HOGENOM" id="CLU_055737_7_3_11"/>
<dbReference type="BioCyc" id="MSP164756:G1G6O-1616-MONOMER"/>
<dbReference type="GO" id="GO:0005886">
    <property type="term" value="C:plasma membrane"/>
    <property type="evidence" value="ECO:0007669"/>
    <property type="project" value="UniProtKB-SubCell"/>
</dbReference>
<dbReference type="GO" id="GO:0045271">
    <property type="term" value="C:respiratory chain complex I"/>
    <property type="evidence" value="ECO:0007669"/>
    <property type="project" value="TreeGrafter"/>
</dbReference>
<dbReference type="GO" id="GO:0051539">
    <property type="term" value="F:4 iron, 4 sulfur cluster binding"/>
    <property type="evidence" value="ECO:0007669"/>
    <property type="project" value="UniProtKB-KW"/>
</dbReference>
<dbReference type="GO" id="GO:0005506">
    <property type="term" value="F:iron ion binding"/>
    <property type="evidence" value="ECO:0007669"/>
    <property type="project" value="UniProtKB-UniRule"/>
</dbReference>
<dbReference type="GO" id="GO:0008137">
    <property type="term" value="F:NADH dehydrogenase (ubiquinone) activity"/>
    <property type="evidence" value="ECO:0007669"/>
    <property type="project" value="InterPro"/>
</dbReference>
<dbReference type="GO" id="GO:0050136">
    <property type="term" value="F:NADH:ubiquinone reductase (non-electrogenic) activity"/>
    <property type="evidence" value="ECO:0007669"/>
    <property type="project" value="UniProtKB-UniRule"/>
</dbReference>
<dbReference type="GO" id="GO:0048038">
    <property type="term" value="F:quinone binding"/>
    <property type="evidence" value="ECO:0007669"/>
    <property type="project" value="UniProtKB-KW"/>
</dbReference>
<dbReference type="GO" id="GO:0009060">
    <property type="term" value="P:aerobic respiration"/>
    <property type="evidence" value="ECO:0007669"/>
    <property type="project" value="TreeGrafter"/>
</dbReference>
<dbReference type="GO" id="GO:0015990">
    <property type="term" value="P:electron transport coupled proton transport"/>
    <property type="evidence" value="ECO:0007669"/>
    <property type="project" value="TreeGrafter"/>
</dbReference>
<dbReference type="FunFam" id="3.40.50.12280:FF:000004">
    <property type="entry name" value="NADH-quinone oxidoreductase subunit B"/>
    <property type="match status" value="1"/>
</dbReference>
<dbReference type="Gene3D" id="3.40.50.12280">
    <property type="match status" value="1"/>
</dbReference>
<dbReference type="HAMAP" id="MF_01356">
    <property type="entry name" value="NDH1_NuoB"/>
    <property type="match status" value="1"/>
</dbReference>
<dbReference type="InterPro" id="IPR006137">
    <property type="entry name" value="NADH_UbQ_OxRdtase-like_20kDa"/>
</dbReference>
<dbReference type="InterPro" id="IPR006138">
    <property type="entry name" value="NADH_UQ_OxRdtase_20Kd_su"/>
</dbReference>
<dbReference type="NCBIfam" id="TIGR01957">
    <property type="entry name" value="nuoB_fam"/>
    <property type="match status" value="1"/>
</dbReference>
<dbReference type="NCBIfam" id="NF005012">
    <property type="entry name" value="PRK06411.1"/>
    <property type="match status" value="1"/>
</dbReference>
<dbReference type="PANTHER" id="PTHR11995">
    <property type="entry name" value="NADH DEHYDROGENASE"/>
    <property type="match status" value="1"/>
</dbReference>
<dbReference type="PANTHER" id="PTHR11995:SF14">
    <property type="entry name" value="NADH DEHYDROGENASE [UBIQUINONE] IRON-SULFUR PROTEIN 7, MITOCHONDRIAL"/>
    <property type="match status" value="1"/>
</dbReference>
<dbReference type="Pfam" id="PF01058">
    <property type="entry name" value="Oxidored_q6"/>
    <property type="match status" value="1"/>
</dbReference>
<dbReference type="SUPFAM" id="SSF56770">
    <property type="entry name" value="HydA/Nqo6-like"/>
    <property type="match status" value="1"/>
</dbReference>
<dbReference type="PROSITE" id="PS01150">
    <property type="entry name" value="COMPLEX1_20K"/>
    <property type="match status" value="1"/>
</dbReference>
<accession>Q1BBP4</accession>
<evidence type="ECO:0000255" key="1">
    <source>
        <dbReference type="HAMAP-Rule" id="MF_01356"/>
    </source>
</evidence>
<protein>
    <recommendedName>
        <fullName evidence="1">NADH-quinone oxidoreductase subunit B</fullName>
        <ecNumber evidence="1">7.1.1.-</ecNumber>
    </recommendedName>
    <alternativeName>
        <fullName evidence="1">NADH dehydrogenase I subunit B</fullName>
    </alternativeName>
    <alternativeName>
        <fullName evidence="1">NDH-1 subunit B</fullName>
    </alternativeName>
</protein>
<comment type="function">
    <text evidence="1">NDH-1 shuttles electrons from NADH, via FMN and iron-sulfur (Fe-S) centers, to quinones in the respiratory chain. The immediate electron acceptor for the enzyme in this species is believed to be a menaquinone. Couples the redox reaction to proton translocation (for every two electrons transferred, four hydrogen ions are translocated across the cytoplasmic membrane), and thus conserves the redox energy in a proton gradient.</text>
</comment>
<comment type="catalytic activity">
    <reaction evidence="1">
        <text>a quinone + NADH + 5 H(+)(in) = a quinol + NAD(+) + 4 H(+)(out)</text>
        <dbReference type="Rhea" id="RHEA:57888"/>
        <dbReference type="ChEBI" id="CHEBI:15378"/>
        <dbReference type="ChEBI" id="CHEBI:24646"/>
        <dbReference type="ChEBI" id="CHEBI:57540"/>
        <dbReference type="ChEBI" id="CHEBI:57945"/>
        <dbReference type="ChEBI" id="CHEBI:132124"/>
    </reaction>
</comment>
<comment type="cofactor">
    <cofactor evidence="1">
        <name>[4Fe-4S] cluster</name>
        <dbReference type="ChEBI" id="CHEBI:49883"/>
    </cofactor>
    <text evidence="1">Binds 1 [4Fe-4S] cluster.</text>
</comment>
<comment type="subunit">
    <text evidence="1">NDH-1 is composed of 14 different subunits. Subunits NuoB, C, D, E, F, and G constitute the peripheral sector of the complex.</text>
</comment>
<comment type="subcellular location">
    <subcellularLocation>
        <location evidence="1">Cell membrane</location>
        <topology evidence="1">Peripheral membrane protein</topology>
        <orientation evidence="1">Cytoplasmic side</orientation>
    </subcellularLocation>
</comment>
<comment type="similarity">
    <text evidence="1">Belongs to the complex I 20 kDa subunit family.</text>
</comment>
<gene>
    <name evidence="1" type="primary">nuoB</name>
    <name type="ordered locus">Mmcs_1579</name>
</gene>